<protein>
    <recommendedName>
        <fullName>Putative phosphatidylglycerol/phosphatidylinositol transfer protein 2</fullName>
        <shortName>PG/PI-TP</shortName>
    </recommendedName>
</protein>
<evidence type="ECO:0000250" key="1"/>
<evidence type="ECO:0000255" key="2"/>
<evidence type="ECO:0000305" key="3"/>
<gene>
    <name type="ORF">DDB_G0282109</name>
</gene>
<reference key="1">
    <citation type="journal article" date="2005" name="Nature">
        <title>The genome of the social amoeba Dictyostelium discoideum.</title>
        <authorList>
            <person name="Eichinger L."/>
            <person name="Pachebat J.A."/>
            <person name="Gloeckner G."/>
            <person name="Rajandream M.A."/>
            <person name="Sucgang R."/>
            <person name="Berriman M."/>
            <person name="Song J."/>
            <person name="Olsen R."/>
            <person name="Szafranski K."/>
            <person name="Xu Q."/>
            <person name="Tunggal B."/>
            <person name="Kummerfeld S."/>
            <person name="Madera M."/>
            <person name="Konfortov B.A."/>
            <person name="Rivero F."/>
            <person name="Bankier A.T."/>
            <person name="Lehmann R."/>
            <person name="Hamlin N."/>
            <person name="Davies R."/>
            <person name="Gaudet P."/>
            <person name="Fey P."/>
            <person name="Pilcher K."/>
            <person name="Chen G."/>
            <person name="Saunders D."/>
            <person name="Sodergren E.J."/>
            <person name="Davis P."/>
            <person name="Kerhornou A."/>
            <person name="Nie X."/>
            <person name="Hall N."/>
            <person name="Anjard C."/>
            <person name="Hemphill L."/>
            <person name="Bason N."/>
            <person name="Farbrother P."/>
            <person name="Desany B."/>
            <person name="Just E."/>
            <person name="Morio T."/>
            <person name="Rost R."/>
            <person name="Churcher C.M."/>
            <person name="Cooper J."/>
            <person name="Haydock S."/>
            <person name="van Driessche N."/>
            <person name="Cronin A."/>
            <person name="Goodhead I."/>
            <person name="Muzny D.M."/>
            <person name="Mourier T."/>
            <person name="Pain A."/>
            <person name="Lu M."/>
            <person name="Harper D."/>
            <person name="Lindsay R."/>
            <person name="Hauser H."/>
            <person name="James K.D."/>
            <person name="Quiles M."/>
            <person name="Madan Babu M."/>
            <person name="Saito T."/>
            <person name="Buchrieser C."/>
            <person name="Wardroper A."/>
            <person name="Felder M."/>
            <person name="Thangavelu M."/>
            <person name="Johnson D."/>
            <person name="Knights A."/>
            <person name="Loulseged H."/>
            <person name="Mungall K.L."/>
            <person name="Oliver K."/>
            <person name="Price C."/>
            <person name="Quail M.A."/>
            <person name="Urushihara H."/>
            <person name="Hernandez J."/>
            <person name="Rabbinowitsch E."/>
            <person name="Steffen D."/>
            <person name="Sanders M."/>
            <person name="Ma J."/>
            <person name="Kohara Y."/>
            <person name="Sharp S."/>
            <person name="Simmonds M.N."/>
            <person name="Spiegler S."/>
            <person name="Tivey A."/>
            <person name="Sugano S."/>
            <person name="White B."/>
            <person name="Walker D."/>
            <person name="Woodward J.R."/>
            <person name="Winckler T."/>
            <person name="Tanaka Y."/>
            <person name="Shaulsky G."/>
            <person name="Schleicher M."/>
            <person name="Weinstock G.M."/>
            <person name="Rosenthal A."/>
            <person name="Cox E.C."/>
            <person name="Chisholm R.L."/>
            <person name="Gibbs R.A."/>
            <person name="Loomis W.F."/>
            <person name="Platzer M."/>
            <person name="Kay R.R."/>
            <person name="Williams J.G."/>
            <person name="Dear P.H."/>
            <person name="Noegel A.A."/>
            <person name="Barrell B.G."/>
            <person name="Kuspa A."/>
        </authorList>
    </citation>
    <scope>NUCLEOTIDE SEQUENCE [LARGE SCALE GENOMIC DNA]</scope>
    <source>
        <strain>AX4</strain>
    </source>
</reference>
<feature type="signal peptide" evidence="2">
    <location>
        <begin position="1"/>
        <end position="20"/>
    </location>
</feature>
<feature type="chain" id="PRO_0000365590" description="Putative phosphatidylglycerol/phosphatidylinositol transfer protein 2">
    <location>
        <begin position="21"/>
        <end position="142"/>
    </location>
</feature>
<accession>Q54SZ8</accession>
<name>NPC22_DICDI</name>
<organism>
    <name type="scientific">Dictyostelium discoideum</name>
    <name type="common">Social amoeba</name>
    <dbReference type="NCBI Taxonomy" id="44689"/>
    <lineage>
        <taxon>Eukaryota</taxon>
        <taxon>Amoebozoa</taxon>
        <taxon>Evosea</taxon>
        <taxon>Eumycetozoa</taxon>
        <taxon>Dictyostelia</taxon>
        <taxon>Dictyosteliales</taxon>
        <taxon>Dictyosteliaceae</taxon>
        <taxon>Dictyostelium</taxon>
    </lineage>
</organism>
<keyword id="KW-0445">Lipid transport</keyword>
<keyword id="KW-1185">Reference proteome</keyword>
<keyword id="KW-0732">Signal</keyword>
<keyword id="KW-0813">Transport</keyword>
<proteinExistence type="inferred from homology"/>
<comment type="function">
    <text evidence="1">Catalyzes the intermembrane transfer of phosphatidylglycerol and phosphatidylinositol.</text>
</comment>
<comment type="subunit">
    <text evidence="1">Monomer.</text>
</comment>
<comment type="similarity">
    <text evidence="3">Belongs to the NPC2 family.</text>
</comment>
<dbReference type="EMBL" id="AAFI02000045">
    <property type="protein sequence ID" value="EAL66380.1"/>
    <property type="molecule type" value="Genomic_DNA"/>
</dbReference>
<dbReference type="RefSeq" id="XP_640357.1">
    <property type="nucleotide sequence ID" value="XM_635265.1"/>
</dbReference>
<dbReference type="SMR" id="Q54SZ8"/>
<dbReference type="FunCoup" id="Q54SZ8">
    <property type="interactions" value="3"/>
</dbReference>
<dbReference type="PaxDb" id="44689-DDB0205137"/>
<dbReference type="EnsemblProtists" id="EAL66380">
    <property type="protein sequence ID" value="EAL66380"/>
    <property type="gene ID" value="DDB_G0282109"/>
</dbReference>
<dbReference type="GeneID" id="8623412"/>
<dbReference type="KEGG" id="ddi:DDB_G0282109"/>
<dbReference type="dictyBase" id="DDB_G0282109"/>
<dbReference type="VEuPathDB" id="AmoebaDB:DDB_G0282109"/>
<dbReference type="eggNOG" id="ENOG502SFRH">
    <property type="taxonomic scope" value="Eukaryota"/>
</dbReference>
<dbReference type="HOGENOM" id="CLU_097982_2_0_1"/>
<dbReference type="InParanoid" id="Q54SZ8"/>
<dbReference type="OMA" id="QTIFPRN"/>
<dbReference type="PhylomeDB" id="Q54SZ8"/>
<dbReference type="Reactome" id="R-DDI-6798695">
    <property type="pathway name" value="Neutrophil degranulation"/>
</dbReference>
<dbReference type="Reactome" id="R-DDI-8964038">
    <property type="pathway name" value="LDL clearance"/>
</dbReference>
<dbReference type="PRO" id="PR:Q54SZ8"/>
<dbReference type="Proteomes" id="UP000002195">
    <property type="component" value="Chromosome 3"/>
</dbReference>
<dbReference type="GO" id="GO:0032934">
    <property type="term" value="F:sterol binding"/>
    <property type="evidence" value="ECO:0000318"/>
    <property type="project" value="GO_Central"/>
</dbReference>
<dbReference type="GO" id="GO:0015918">
    <property type="term" value="P:sterol transport"/>
    <property type="evidence" value="ECO:0000318"/>
    <property type="project" value="GO_Central"/>
</dbReference>
<dbReference type="Gene3D" id="2.60.40.770">
    <property type="match status" value="1"/>
</dbReference>
<dbReference type="InterPro" id="IPR014756">
    <property type="entry name" value="Ig_E-set"/>
</dbReference>
<dbReference type="InterPro" id="IPR003172">
    <property type="entry name" value="ML_dom"/>
</dbReference>
<dbReference type="InterPro" id="IPR039670">
    <property type="entry name" value="NPC2-like"/>
</dbReference>
<dbReference type="PANTHER" id="PTHR11306:SF60">
    <property type="entry name" value="COUNTIN-3-RELATED"/>
    <property type="match status" value="1"/>
</dbReference>
<dbReference type="PANTHER" id="PTHR11306">
    <property type="entry name" value="NIEMANN PICK TYPE C2 PROTEIN NPC2-RELATED"/>
    <property type="match status" value="1"/>
</dbReference>
<dbReference type="Pfam" id="PF02221">
    <property type="entry name" value="E1_DerP2_DerF2"/>
    <property type="match status" value="1"/>
</dbReference>
<dbReference type="SMART" id="SM00737">
    <property type="entry name" value="ML"/>
    <property type="match status" value="1"/>
</dbReference>
<dbReference type="SUPFAM" id="SSF81296">
    <property type="entry name" value="E set domains"/>
    <property type="match status" value="1"/>
</dbReference>
<sequence length="142" mass="15310">MKFYLYLSILLILLTSTSFGDIWSNCGPNEKFKITSVSIVPDPPVKGKLITISGSGVLGENLTSGQVAILVKFGLITLINEKKDICTLPGSPYKCPIKEGEYSHTINFTIPEAAPNGKYTGHVSVTDQESSEIACIDVTLTL</sequence>